<keyword id="KW-0963">Cytoplasm</keyword>
<keyword id="KW-0251">Elongation factor</keyword>
<keyword id="KW-0342">GTP-binding</keyword>
<keyword id="KW-0547">Nucleotide-binding</keyword>
<keyword id="KW-0648">Protein biosynthesis</keyword>
<keyword id="KW-1185">Reference proteome</keyword>
<organism>
    <name type="scientific">Stutzerimonas stutzeri (strain A1501)</name>
    <name type="common">Pseudomonas stutzeri</name>
    <dbReference type="NCBI Taxonomy" id="379731"/>
    <lineage>
        <taxon>Bacteria</taxon>
        <taxon>Pseudomonadati</taxon>
        <taxon>Pseudomonadota</taxon>
        <taxon>Gammaproteobacteria</taxon>
        <taxon>Pseudomonadales</taxon>
        <taxon>Pseudomonadaceae</taxon>
        <taxon>Stutzerimonas</taxon>
    </lineage>
</organism>
<name>EFG_STUS1</name>
<dbReference type="EMBL" id="CP000304">
    <property type="protein sequence ID" value="ABP78478.1"/>
    <property type="molecule type" value="Genomic_DNA"/>
</dbReference>
<dbReference type="RefSeq" id="WP_011911985.1">
    <property type="nucleotide sequence ID" value="NC_009434.1"/>
</dbReference>
<dbReference type="SMR" id="A4VHM7"/>
<dbReference type="KEGG" id="psa:PST_0781"/>
<dbReference type="eggNOG" id="COG0480">
    <property type="taxonomic scope" value="Bacteria"/>
</dbReference>
<dbReference type="HOGENOM" id="CLU_002794_4_1_6"/>
<dbReference type="Proteomes" id="UP000000233">
    <property type="component" value="Chromosome"/>
</dbReference>
<dbReference type="GO" id="GO:0005737">
    <property type="term" value="C:cytoplasm"/>
    <property type="evidence" value="ECO:0007669"/>
    <property type="project" value="UniProtKB-SubCell"/>
</dbReference>
<dbReference type="GO" id="GO:0005525">
    <property type="term" value="F:GTP binding"/>
    <property type="evidence" value="ECO:0007669"/>
    <property type="project" value="UniProtKB-UniRule"/>
</dbReference>
<dbReference type="GO" id="GO:0003924">
    <property type="term" value="F:GTPase activity"/>
    <property type="evidence" value="ECO:0007669"/>
    <property type="project" value="InterPro"/>
</dbReference>
<dbReference type="GO" id="GO:0097216">
    <property type="term" value="F:guanosine tetraphosphate binding"/>
    <property type="evidence" value="ECO:0007669"/>
    <property type="project" value="UniProtKB-ARBA"/>
</dbReference>
<dbReference type="GO" id="GO:0003746">
    <property type="term" value="F:translation elongation factor activity"/>
    <property type="evidence" value="ECO:0007669"/>
    <property type="project" value="UniProtKB-UniRule"/>
</dbReference>
<dbReference type="GO" id="GO:0032790">
    <property type="term" value="P:ribosome disassembly"/>
    <property type="evidence" value="ECO:0007669"/>
    <property type="project" value="TreeGrafter"/>
</dbReference>
<dbReference type="CDD" id="cd01886">
    <property type="entry name" value="EF-G"/>
    <property type="match status" value="1"/>
</dbReference>
<dbReference type="CDD" id="cd16262">
    <property type="entry name" value="EFG_III"/>
    <property type="match status" value="1"/>
</dbReference>
<dbReference type="CDD" id="cd01434">
    <property type="entry name" value="EFG_mtEFG1_IV"/>
    <property type="match status" value="1"/>
</dbReference>
<dbReference type="CDD" id="cd03713">
    <property type="entry name" value="EFG_mtEFG_C"/>
    <property type="match status" value="1"/>
</dbReference>
<dbReference type="CDD" id="cd04088">
    <property type="entry name" value="EFG_mtEFG_II"/>
    <property type="match status" value="1"/>
</dbReference>
<dbReference type="FunFam" id="2.40.30.10:FF:000006">
    <property type="entry name" value="Elongation factor G"/>
    <property type="match status" value="1"/>
</dbReference>
<dbReference type="FunFam" id="3.30.230.10:FF:000003">
    <property type="entry name" value="Elongation factor G"/>
    <property type="match status" value="1"/>
</dbReference>
<dbReference type="FunFam" id="3.30.70.240:FF:000001">
    <property type="entry name" value="Elongation factor G"/>
    <property type="match status" value="1"/>
</dbReference>
<dbReference type="FunFam" id="3.30.70.870:FF:000001">
    <property type="entry name" value="Elongation factor G"/>
    <property type="match status" value="1"/>
</dbReference>
<dbReference type="FunFam" id="3.40.50.300:FF:000029">
    <property type="entry name" value="Elongation factor G"/>
    <property type="match status" value="1"/>
</dbReference>
<dbReference type="Gene3D" id="3.30.230.10">
    <property type="match status" value="1"/>
</dbReference>
<dbReference type="Gene3D" id="3.30.70.240">
    <property type="match status" value="1"/>
</dbReference>
<dbReference type="Gene3D" id="3.30.70.870">
    <property type="entry name" value="Elongation Factor G (Translational Gtpase), domain 3"/>
    <property type="match status" value="1"/>
</dbReference>
<dbReference type="Gene3D" id="3.40.50.300">
    <property type="entry name" value="P-loop containing nucleotide triphosphate hydrolases"/>
    <property type="match status" value="1"/>
</dbReference>
<dbReference type="Gene3D" id="2.40.30.10">
    <property type="entry name" value="Translation factors"/>
    <property type="match status" value="1"/>
</dbReference>
<dbReference type="HAMAP" id="MF_00054_B">
    <property type="entry name" value="EF_G_EF_2_B"/>
    <property type="match status" value="1"/>
</dbReference>
<dbReference type="InterPro" id="IPR041095">
    <property type="entry name" value="EFG_II"/>
</dbReference>
<dbReference type="InterPro" id="IPR009022">
    <property type="entry name" value="EFG_III"/>
</dbReference>
<dbReference type="InterPro" id="IPR035647">
    <property type="entry name" value="EFG_III/V"/>
</dbReference>
<dbReference type="InterPro" id="IPR047872">
    <property type="entry name" value="EFG_IV"/>
</dbReference>
<dbReference type="InterPro" id="IPR035649">
    <property type="entry name" value="EFG_V"/>
</dbReference>
<dbReference type="InterPro" id="IPR000640">
    <property type="entry name" value="EFG_V-like"/>
</dbReference>
<dbReference type="InterPro" id="IPR004161">
    <property type="entry name" value="EFTu-like_2"/>
</dbReference>
<dbReference type="InterPro" id="IPR031157">
    <property type="entry name" value="G_TR_CS"/>
</dbReference>
<dbReference type="InterPro" id="IPR027417">
    <property type="entry name" value="P-loop_NTPase"/>
</dbReference>
<dbReference type="InterPro" id="IPR020568">
    <property type="entry name" value="Ribosomal_Su5_D2-typ_SF"/>
</dbReference>
<dbReference type="InterPro" id="IPR014721">
    <property type="entry name" value="Ribsml_uS5_D2-typ_fold_subgr"/>
</dbReference>
<dbReference type="InterPro" id="IPR005225">
    <property type="entry name" value="Small_GTP-bd"/>
</dbReference>
<dbReference type="InterPro" id="IPR000795">
    <property type="entry name" value="T_Tr_GTP-bd_dom"/>
</dbReference>
<dbReference type="InterPro" id="IPR009000">
    <property type="entry name" value="Transl_B-barrel_sf"/>
</dbReference>
<dbReference type="InterPro" id="IPR004540">
    <property type="entry name" value="Transl_elong_EFG/EF2"/>
</dbReference>
<dbReference type="InterPro" id="IPR005517">
    <property type="entry name" value="Transl_elong_EFG/EF2_IV"/>
</dbReference>
<dbReference type="NCBIfam" id="TIGR00484">
    <property type="entry name" value="EF-G"/>
    <property type="match status" value="1"/>
</dbReference>
<dbReference type="NCBIfam" id="NF009381">
    <property type="entry name" value="PRK12740.1-5"/>
    <property type="match status" value="1"/>
</dbReference>
<dbReference type="NCBIfam" id="TIGR00231">
    <property type="entry name" value="small_GTP"/>
    <property type="match status" value="1"/>
</dbReference>
<dbReference type="PANTHER" id="PTHR43261:SF1">
    <property type="entry name" value="RIBOSOME-RELEASING FACTOR 2, MITOCHONDRIAL"/>
    <property type="match status" value="1"/>
</dbReference>
<dbReference type="PANTHER" id="PTHR43261">
    <property type="entry name" value="TRANSLATION ELONGATION FACTOR G-RELATED"/>
    <property type="match status" value="1"/>
</dbReference>
<dbReference type="Pfam" id="PF00679">
    <property type="entry name" value="EFG_C"/>
    <property type="match status" value="1"/>
</dbReference>
<dbReference type="Pfam" id="PF14492">
    <property type="entry name" value="EFG_III"/>
    <property type="match status" value="1"/>
</dbReference>
<dbReference type="Pfam" id="PF03764">
    <property type="entry name" value="EFG_IV"/>
    <property type="match status" value="1"/>
</dbReference>
<dbReference type="Pfam" id="PF00009">
    <property type="entry name" value="GTP_EFTU"/>
    <property type="match status" value="1"/>
</dbReference>
<dbReference type="Pfam" id="PF03144">
    <property type="entry name" value="GTP_EFTU_D2"/>
    <property type="match status" value="1"/>
</dbReference>
<dbReference type="PRINTS" id="PR00315">
    <property type="entry name" value="ELONGATNFCT"/>
</dbReference>
<dbReference type="SMART" id="SM00838">
    <property type="entry name" value="EFG_C"/>
    <property type="match status" value="1"/>
</dbReference>
<dbReference type="SMART" id="SM00889">
    <property type="entry name" value="EFG_IV"/>
    <property type="match status" value="1"/>
</dbReference>
<dbReference type="SUPFAM" id="SSF54980">
    <property type="entry name" value="EF-G C-terminal domain-like"/>
    <property type="match status" value="2"/>
</dbReference>
<dbReference type="SUPFAM" id="SSF52540">
    <property type="entry name" value="P-loop containing nucleoside triphosphate hydrolases"/>
    <property type="match status" value="1"/>
</dbReference>
<dbReference type="SUPFAM" id="SSF54211">
    <property type="entry name" value="Ribosomal protein S5 domain 2-like"/>
    <property type="match status" value="1"/>
</dbReference>
<dbReference type="SUPFAM" id="SSF50447">
    <property type="entry name" value="Translation proteins"/>
    <property type="match status" value="1"/>
</dbReference>
<dbReference type="PROSITE" id="PS00301">
    <property type="entry name" value="G_TR_1"/>
    <property type="match status" value="1"/>
</dbReference>
<dbReference type="PROSITE" id="PS51722">
    <property type="entry name" value="G_TR_2"/>
    <property type="match status" value="1"/>
</dbReference>
<feature type="chain" id="PRO_1000008871" description="Elongation factor G">
    <location>
        <begin position="1"/>
        <end position="706"/>
    </location>
</feature>
<feature type="domain" description="tr-type G">
    <location>
        <begin position="8"/>
        <end position="290"/>
    </location>
</feature>
<feature type="binding site" evidence="1">
    <location>
        <begin position="17"/>
        <end position="24"/>
    </location>
    <ligand>
        <name>GTP</name>
        <dbReference type="ChEBI" id="CHEBI:37565"/>
    </ligand>
</feature>
<feature type="binding site" evidence="1">
    <location>
        <begin position="88"/>
        <end position="92"/>
    </location>
    <ligand>
        <name>GTP</name>
        <dbReference type="ChEBI" id="CHEBI:37565"/>
    </ligand>
</feature>
<feature type="binding site" evidence="1">
    <location>
        <begin position="142"/>
        <end position="145"/>
    </location>
    <ligand>
        <name>GTP</name>
        <dbReference type="ChEBI" id="CHEBI:37565"/>
    </ligand>
</feature>
<sequence>MARTTPINRYRNIGICAHVDAGKTTTTERILFYTGLSHKMGEVHDGAATTDWMVQEQERGITITSAAVTTFWQGSRGQYDNYRVNVIDTPGHVDFTIEVERSLRVLDGAVVVFCGTSGVEPQSETVWRQANKYGVPRIVYVNKMDRQGANFLRVVGQIKQRLGHTPVPVQLAIGSEENFAGQIDLIKMKAIYWNDDDKGTTYREEEIPAELMDLAEEYRSNMIEAAAEANEELMNKYLEGGELTIEEIKAGLRQRTIACEIVPAVCGSSFKNKGVPLVLDAVIDYLPAPTEIPPIQGVNPDNEEQVDERHASDDEPFSALAFKIATDPFVGTLTFTRVYSGVLSSGDSVINSVKGKKERVGRMVQMHANQRDEIKECRAGDIAALIGMKDVTTGDTLCSIEKPIILERMDFPEPVISVAVEPKTKADQEKMGIALGKLAQEDPSFRVQTDEETGQTIISGMGELHLDILVDRMRREFNVEANIGKPQVSYRETITKDNVEIEGKFVRQSGGRGQFGHCWIRFSTPDVDEKGNITEGLVFTNEVVGGVVPKEYIPAIQKGIEEQMKNGVVAGYPLIGLKATVFDGSYHDVDSNEMAFKVAASMATKQLAQKGGGKVLEPIMKVEVVTPEDYMGDVMGDLNRRRGLIQGMEDSVSGKVIRAEVPLGEMFGYATDVRSMSQGRASYSMEFSKYAEAPANIVETLVKKQG</sequence>
<proteinExistence type="inferred from homology"/>
<comment type="function">
    <text evidence="1">Catalyzes the GTP-dependent ribosomal translocation step during translation elongation. During this step, the ribosome changes from the pre-translocational (PRE) to the post-translocational (POST) state as the newly formed A-site-bound peptidyl-tRNA and P-site-bound deacylated tRNA move to the P and E sites, respectively. Catalyzes the coordinated movement of the two tRNA molecules, the mRNA and conformational changes in the ribosome.</text>
</comment>
<comment type="subcellular location">
    <subcellularLocation>
        <location evidence="1">Cytoplasm</location>
    </subcellularLocation>
</comment>
<comment type="similarity">
    <text evidence="1">Belongs to the TRAFAC class translation factor GTPase superfamily. Classic translation factor GTPase family. EF-G/EF-2 subfamily.</text>
</comment>
<protein>
    <recommendedName>
        <fullName evidence="1">Elongation factor G</fullName>
        <shortName evidence="1">EF-G</shortName>
    </recommendedName>
</protein>
<reference key="1">
    <citation type="journal article" date="2008" name="Proc. Natl. Acad. Sci. U.S.A.">
        <title>Nitrogen fixation island and rhizosphere competence traits in the genome of root-associated Pseudomonas stutzeri A1501.</title>
        <authorList>
            <person name="Yan Y."/>
            <person name="Yang J."/>
            <person name="Dou Y."/>
            <person name="Chen M."/>
            <person name="Ping S."/>
            <person name="Peng J."/>
            <person name="Lu W."/>
            <person name="Zhang W."/>
            <person name="Yao Z."/>
            <person name="Li H."/>
            <person name="Liu W."/>
            <person name="He S."/>
            <person name="Geng L."/>
            <person name="Zhang X."/>
            <person name="Yang F."/>
            <person name="Yu H."/>
            <person name="Zhan Y."/>
            <person name="Li D."/>
            <person name="Lin Z."/>
            <person name="Wang Y."/>
            <person name="Elmerich C."/>
            <person name="Lin M."/>
            <person name="Jin Q."/>
        </authorList>
    </citation>
    <scope>NUCLEOTIDE SEQUENCE [LARGE SCALE GENOMIC DNA]</scope>
    <source>
        <strain>A1501</strain>
    </source>
</reference>
<evidence type="ECO:0000255" key="1">
    <source>
        <dbReference type="HAMAP-Rule" id="MF_00054"/>
    </source>
</evidence>
<gene>
    <name evidence="1" type="primary">fusA</name>
    <name type="ordered locus">PST_0781</name>
</gene>
<accession>A4VHM7</accession>